<comment type="function">
    <text evidence="1">DNA-dependent RNA polymerase (RNAP) catalyzes the transcription of DNA into RNA using the four ribonucleoside triphosphates as substrates. The Rpo2 subunit (Rpo2N and Rpo2C in this organism) is implicated in DNA promoter recognition and in nucleotide binding.</text>
</comment>
<comment type="catalytic activity">
    <reaction evidence="2">
        <text>RNA(n) + a ribonucleoside 5'-triphosphate = RNA(n+1) + diphosphate</text>
        <dbReference type="Rhea" id="RHEA:21248"/>
        <dbReference type="Rhea" id="RHEA-COMP:14527"/>
        <dbReference type="Rhea" id="RHEA-COMP:17342"/>
        <dbReference type="ChEBI" id="CHEBI:33019"/>
        <dbReference type="ChEBI" id="CHEBI:61557"/>
        <dbReference type="ChEBI" id="CHEBI:140395"/>
        <dbReference type="EC" id="2.7.7.6"/>
    </reaction>
</comment>
<comment type="cofactor">
    <cofactor evidence="1">
        <name>Zn(2+)</name>
        <dbReference type="ChEBI" id="CHEBI:29105"/>
    </cofactor>
    <text evidence="1">Binds 1 Zn(2+) per subunit.</text>
</comment>
<comment type="subunit">
    <text evidence="1">Part of the RNA polymerase complex.</text>
</comment>
<comment type="subcellular location">
    <subcellularLocation>
        <location evidence="1">Cytoplasm</location>
    </subcellularLocation>
</comment>
<comment type="similarity">
    <text evidence="4">Belongs to the RNA polymerase beta chain family.</text>
</comment>
<protein>
    <recommendedName>
        <fullName evidence="4">DNA-directed RNA polymerase subunit Rpo2C</fullName>
        <ecNumber evidence="2">2.7.7.6</ecNumber>
    </recommendedName>
    <alternativeName>
        <fullName evidence="3">DNA-directed RNA polymerase subunit B'</fullName>
    </alternativeName>
</protein>
<name>RPO2C_METJA</name>
<proteinExistence type="inferred from homology"/>
<sequence>MKNLASREVNIYVNGKLVGTTDKPEELVNFIREKRRKGELPQYTTVAYNEESNDIHINTDAGRIVRPLIVVENGKPKLTKEHIEKLKKGEITFSDLVKEGVIEYLDAEEEENAYIALSEEELTEKHTHLEIDPLTILGIGAGVAPYPEHNSAPRITMAAAMGKQSLGIPMSNIKWRLDTRGHYLHYPQVPIVRTKHQEILGFDKRPAGQNFVVAIMSYEGYNMEDAIVFNKSAIDRGLGRSTFFRTYDACERRYPGGQMDRFEIPDKGVRGYRSEECYRYLEEDGIVAVESHVKGGDVIVGKTSPPRFLEEHEITIQVKPQRRDSSVVVRHGEEGYIDKVILTETKEGNRLVKVKVRDLRIPELGDKFASRHGQKGVMGLTVPQEDLPFTESGIVPDIIINPHAIPSRMTVGQLLEMLGGKVGALEGRRIDGTIFSGEKEWDLRKALEALGFKHHGKEVMYDGKTGKKFEVEIYIGIAYYQKLHHLVAGKIHARSRGPVQVLTRQPTEGRAREGGLRFGEMERDVLIGHGAAMLLKERLMDESDPYDICICSKCGDFAILDYKRGLKYCPICGEIENLYSSKKIPFVRIPYAFKLLLDELKSMCILPRIKVRDKVELEDFEEFVEKLEKEKVKQKQ</sequence>
<dbReference type="EC" id="2.7.7.6" evidence="2"/>
<dbReference type="EMBL" id="L77117">
    <property type="protein sequence ID" value="AAB99044.1"/>
    <property type="molecule type" value="Genomic_DNA"/>
</dbReference>
<dbReference type="PIR" id="H64429">
    <property type="entry name" value="H64429"/>
</dbReference>
<dbReference type="RefSeq" id="WP_010870554.1">
    <property type="nucleotide sequence ID" value="NC_000909.1"/>
</dbReference>
<dbReference type="SMR" id="Q60181"/>
<dbReference type="FunCoup" id="Q60181">
    <property type="interactions" value="96"/>
</dbReference>
<dbReference type="STRING" id="243232.MJ_1041"/>
<dbReference type="PaxDb" id="243232-MJ_1041"/>
<dbReference type="EnsemblBacteria" id="AAB99044">
    <property type="protein sequence ID" value="AAB99044"/>
    <property type="gene ID" value="MJ_1041"/>
</dbReference>
<dbReference type="GeneID" id="1451938"/>
<dbReference type="KEGG" id="mja:MJ_1041"/>
<dbReference type="eggNOG" id="arCOG01762">
    <property type="taxonomic scope" value="Archaea"/>
</dbReference>
<dbReference type="HOGENOM" id="CLU_000524_2_2_2"/>
<dbReference type="InParanoid" id="Q60181"/>
<dbReference type="PhylomeDB" id="Q60181"/>
<dbReference type="Proteomes" id="UP000000805">
    <property type="component" value="Chromosome"/>
</dbReference>
<dbReference type="GO" id="GO:0005737">
    <property type="term" value="C:cytoplasm"/>
    <property type="evidence" value="ECO:0007669"/>
    <property type="project" value="UniProtKB-SubCell"/>
</dbReference>
<dbReference type="GO" id="GO:0000428">
    <property type="term" value="C:DNA-directed RNA polymerase complex"/>
    <property type="evidence" value="ECO:0007669"/>
    <property type="project" value="UniProtKB-KW"/>
</dbReference>
<dbReference type="GO" id="GO:0003677">
    <property type="term" value="F:DNA binding"/>
    <property type="evidence" value="ECO:0007669"/>
    <property type="project" value="UniProtKB-KW"/>
</dbReference>
<dbReference type="GO" id="GO:0003899">
    <property type="term" value="F:DNA-directed RNA polymerase activity"/>
    <property type="evidence" value="ECO:0007669"/>
    <property type="project" value="UniProtKB-EC"/>
</dbReference>
<dbReference type="GO" id="GO:0032549">
    <property type="term" value="F:ribonucleoside binding"/>
    <property type="evidence" value="ECO:0007669"/>
    <property type="project" value="InterPro"/>
</dbReference>
<dbReference type="GO" id="GO:0008270">
    <property type="term" value="F:zinc ion binding"/>
    <property type="evidence" value="ECO:0007669"/>
    <property type="project" value="InterPro"/>
</dbReference>
<dbReference type="GO" id="GO:0006351">
    <property type="term" value="P:DNA-templated transcription"/>
    <property type="evidence" value="ECO:0007669"/>
    <property type="project" value="InterPro"/>
</dbReference>
<dbReference type="CDD" id="cd00653">
    <property type="entry name" value="RNA_pol_B_RPB2"/>
    <property type="match status" value="1"/>
</dbReference>
<dbReference type="FunFam" id="2.40.270.10:FF:000011">
    <property type="entry name" value="DNA-directed RNA polymerase subunit beta"/>
    <property type="match status" value="1"/>
</dbReference>
<dbReference type="Gene3D" id="2.40.50.150">
    <property type="match status" value="1"/>
</dbReference>
<dbReference type="Gene3D" id="3.90.1070.20">
    <property type="match status" value="1"/>
</dbReference>
<dbReference type="Gene3D" id="2.40.270.10">
    <property type="entry name" value="DNA-directed RNA polymerase, subunit 2, domain 6"/>
    <property type="match status" value="1"/>
</dbReference>
<dbReference type="Gene3D" id="3.90.1800.10">
    <property type="entry name" value="RNA polymerase alpha subunit dimerisation domain"/>
    <property type="match status" value="1"/>
</dbReference>
<dbReference type="InterPro" id="IPR015712">
    <property type="entry name" value="DNA-dir_RNA_pol_su2"/>
</dbReference>
<dbReference type="InterPro" id="IPR007120">
    <property type="entry name" value="DNA-dir_RNAP_su2_dom"/>
</dbReference>
<dbReference type="InterPro" id="IPR037033">
    <property type="entry name" value="DNA-dir_RNAP_su2_hyb_sf"/>
</dbReference>
<dbReference type="InterPro" id="IPR007121">
    <property type="entry name" value="RNA_pol_bsu_CS"/>
</dbReference>
<dbReference type="InterPro" id="IPR007646">
    <property type="entry name" value="RNA_pol_Rpb2_4"/>
</dbReference>
<dbReference type="InterPro" id="IPR007647">
    <property type="entry name" value="RNA_pol_Rpb2_5"/>
</dbReference>
<dbReference type="InterPro" id="IPR007641">
    <property type="entry name" value="RNA_pol_Rpb2_7"/>
</dbReference>
<dbReference type="InterPro" id="IPR014724">
    <property type="entry name" value="RNA_pol_RPB2_OB-fold"/>
</dbReference>
<dbReference type="InterPro" id="IPR019969">
    <property type="entry name" value="RNAP_Rpo2"/>
</dbReference>
<dbReference type="NCBIfam" id="TIGR03670">
    <property type="entry name" value="rpoB_arch"/>
    <property type="match status" value="1"/>
</dbReference>
<dbReference type="PANTHER" id="PTHR20856">
    <property type="entry name" value="DNA-DIRECTED RNA POLYMERASE I SUBUNIT 2"/>
    <property type="match status" value="1"/>
</dbReference>
<dbReference type="Pfam" id="PF04566">
    <property type="entry name" value="RNA_pol_Rpb2_4"/>
    <property type="match status" value="1"/>
</dbReference>
<dbReference type="Pfam" id="PF04567">
    <property type="entry name" value="RNA_pol_Rpb2_5"/>
    <property type="match status" value="1"/>
</dbReference>
<dbReference type="Pfam" id="PF00562">
    <property type="entry name" value="RNA_pol_Rpb2_6"/>
    <property type="match status" value="1"/>
</dbReference>
<dbReference type="Pfam" id="PF04560">
    <property type="entry name" value="RNA_pol_Rpb2_7"/>
    <property type="match status" value="1"/>
</dbReference>
<dbReference type="SUPFAM" id="SSF64484">
    <property type="entry name" value="beta and beta-prime subunits of DNA dependent RNA-polymerase"/>
    <property type="match status" value="1"/>
</dbReference>
<dbReference type="PROSITE" id="PS01166">
    <property type="entry name" value="RNA_POL_BETA"/>
    <property type="match status" value="1"/>
</dbReference>
<gene>
    <name evidence="4" type="primary">rpo2C</name>
    <name type="synonym">rpoB1</name>
    <name type="ordered locus">MJ1041</name>
</gene>
<reference key="1">
    <citation type="journal article" date="1996" name="Science">
        <title>Complete genome sequence of the methanogenic archaeon, Methanococcus jannaschii.</title>
        <authorList>
            <person name="Bult C.J."/>
            <person name="White O."/>
            <person name="Olsen G.J."/>
            <person name="Zhou L."/>
            <person name="Fleischmann R.D."/>
            <person name="Sutton G.G."/>
            <person name="Blake J.A."/>
            <person name="FitzGerald L.M."/>
            <person name="Clayton R.A."/>
            <person name="Gocayne J.D."/>
            <person name="Kerlavage A.R."/>
            <person name="Dougherty B.A."/>
            <person name="Tomb J.-F."/>
            <person name="Adams M.D."/>
            <person name="Reich C.I."/>
            <person name="Overbeek R."/>
            <person name="Kirkness E.F."/>
            <person name="Weinstock K.G."/>
            <person name="Merrick J.M."/>
            <person name="Glodek A."/>
            <person name="Scott J.L."/>
            <person name="Geoghagen N.S.M."/>
            <person name="Weidman J.F."/>
            <person name="Fuhrmann J.L."/>
            <person name="Nguyen D."/>
            <person name="Utterback T.R."/>
            <person name="Kelley J.M."/>
            <person name="Peterson J.D."/>
            <person name="Sadow P.W."/>
            <person name="Hanna M.C."/>
            <person name="Cotton M.D."/>
            <person name="Roberts K.M."/>
            <person name="Hurst M.A."/>
            <person name="Kaine B.P."/>
            <person name="Borodovsky M."/>
            <person name="Klenk H.-P."/>
            <person name="Fraser C.M."/>
            <person name="Smith H.O."/>
            <person name="Woese C.R."/>
            <person name="Venter J.C."/>
        </authorList>
    </citation>
    <scope>NUCLEOTIDE SEQUENCE [LARGE SCALE GENOMIC DNA]</scope>
    <source>
        <strain>ATCC 43067 / DSM 2661 / JAL-1 / JCM 10045 / NBRC 100440</strain>
    </source>
</reference>
<evidence type="ECO:0000250" key="1">
    <source>
        <dbReference type="UniProtKB" id="B8YB55"/>
    </source>
</evidence>
<evidence type="ECO:0000250" key="2">
    <source>
        <dbReference type="UniProtKB" id="P11513"/>
    </source>
</evidence>
<evidence type="ECO:0000303" key="3">
    <source>
    </source>
</evidence>
<evidence type="ECO:0000305" key="4"/>
<feature type="chain" id="PRO_0000048102" description="DNA-directed RNA polymerase subunit Rpo2C">
    <location>
        <begin position="1"/>
        <end position="636"/>
    </location>
</feature>
<feature type="binding site" evidence="1">
    <location>
        <position position="551"/>
    </location>
    <ligand>
        <name>Zn(2+)</name>
        <dbReference type="ChEBI" id="CHEBI:29105"/>
    </ligand>
</feature>
<feature type="binding site" evidence="1">
    <location>
        <position position="554"/>
    </location>
    <ligand>
        <name>Zn(2+)</name>
        <dbReference type="ChEBI" id="CHEBI:29105"/>
    </ligand>
</feature>
<feature type="binding site" evidence="1">
    <location>
        <position position="569"/>
    </location>
    <ligand>
        <name>Zn(2+)</name>
        <dbReference type="ChEBI" id="CHEBI:29105"/>
    </ligand>
</feature>
<feature type="binding site" evidence="4">
    <location>
        <position position="572"/>
    </location>
    <ligand>
        <name>Zn(2+)</name>
        <dbReference type="ChEBI" id="CHEBI:29105"/>
    </ligand>
</feature>
<accession>Q60181</accession>
<organism>
    <name type="scientific">Methanocaldococcus jannaschii (strain ATCC 43067 / DSM 2661 / JAL-1 / JCM 10045 / NBRC 100440)</name>
    <name type="common">Methanococcus jannaschii</name>
    <dbReference type="NCBI Taxonomy" id="243232"/>
    <lineage>
        <taxon>Archaea</taxon>
        <taxon>Methanobacteriati</taxon>
        <taxon>Methanobacteriota</taxon>
        <taxon>Methanomada group</taxon>
        <taxon>Methanococci</taxon>
        <taxon>Methanococcales</taxon>
        <taxon>Methanocaldococcaceae</taxon>
        <taxon>Methanocaldococcus</taxon>
    </lineage>
</organism>
<keyword id="KW-0963">Cytoplasm</keyword>
<keyword id="KW-0238">DNA-binding</keyword>
<keyword id="KW-0240">DNA-directed RNA polymerase</keyword>
<keyword id="KW-0479">Metal-binding</keyword>
<keyword id="KW-0548">Nucleotidyltransferase</keyword>
<keyword id="KW-1185">Reference proteome</keyword>
<keyword id="KW-0804">Transcription</keyword>
<keyword id="KW-0808">Transferase</keyword>
<keyword id="KW-0862">Zinc</keyword>